<reference key="1">
    <citation type="journal article" date="2003" name="Proc. Natl. Acad. Sci. U.S.A.">
        <title>Complete genome sequence of the marine planctomycete Pirellula sp. strain 1.</title>
        <authorList>
            <person name="Gloeckner F.O."/>
            <person name="Kube M."/>
            <person name="Bauer M."/>
            <person name="Teeling H."/>
            <person name="Lombardot T."/>
            <person name="Ludwig W."/>
            <person name="Gade D."/>
            <person name="Beck A."/>
            <person name="Borzym K."/>
            <person name="Heitmann K."/>
            <person name="Rabus R."/>
            <person name="Schlesner H."/>
            <person name="Amann R."/>
            <person name="Reinhardt R."/>
        </authorList>
    </citation>
    <scope>NUCLEOTIDE SEQUENCE [LARGE SCALE GENOMIC DNA]</scope>
    <source>
        <strain>DSM 10527 / NCIMB 13988 / SH1</strain>
    </source>
</reference>
<dbReference type="EC" id="2.7.7.8" evidence="1"/>
<dbReference type="EMBL" id="BX294143">
    <property type="protein sequence ID" value="CAD74445.1"/>
    <property type="status" value="ALT_INIT"/>
    <property type="molecule type" value="Genomic_DNA"/>
</dbReference>
<dbReference type="RefSeq" id="NP_866904.1">
    <property type="nucleotide sequence ID" value="NC_005027.1"/>
</dbReference>
<dbReference type="RefSeq" id="WP_037246149.1">
    <property type="nucleotide sequence ID" value="NC_005027.1"/>
</dbReference>
<dbReference type="SMR" id="Q7UR95"/>
<dbReference type="FunCoup" id="Q7UR95">
    <property type="interactions" value="503"/>
</dbReference>
<dbReference type="STRING" id="243090.RB5804"/>
<dbReference type="EnsemblBacteria" id="CAD74445">
    <property type="protein sequence ID" value="CAD74445"/>
    <property type="gene ID" value="RB5804"/>
</dbReference>
<dbReference type="KEGG" id="rba:RB5804"/>
<dbReference type="PATRIC" id="fig|243090.15.peg.2795"/>
<dbReference type="eggNOG" id="COG1185">
    <property type="taxonomic scope" value="Bacteria"/>
</dbReference>
<dbReference type="HOGENOM" id="CLU_004217_2_2_0"/>
<dbReference type="InParanoid" id="Q7UR95"/>
<dbReference type="OrthoDB" id="9804305at2"/>
<dbReference type="Proteomes" id="UP000001025">
    <property type="component" value="Chromosome"/>
</dbReference>
<dbReference type="GO" id="GO:0005829">
    <property type="term" value="C:cytosol"/>
    <property type="evidence" value="ECO:0000318"/>
    <property type="project" value="GO_Central"/>
</dbReference>
<dbReference type="GO" id="GO:0000175">
    <property type="term" value="F:3'-5'-RNA exonuclease activity"/>
    <property type="evidence" value="ECO:0000318"/>
    <property type="project" value="GO_Central"/>
</dbReference>
<dbReference type="GO" id="GO:0000287">
    <property type="term" value="F:magnesium ion binding"/>
    <property type="evidence" value="ECO:0007669"/>
    <property type="project" value="UniProtKB-UniRule"/>
</dbReference>
<dbReference type="GO" id="GO:0004654">
    <property type="term" value="F:polyribonucleotide nucleotidyltransferase activity"/>
    <property type="evidence" value="ECO:0000318"/>
    <property type="project" value="GO_Central"/>
</dbReference>
<dbReference type="GO" id="GO:0003723">
    <property type="term" value="F:RNA binding"/>
    <property type="evidence" value="ECO:0007669"/>
    <property type="project" value="UniProtKB-UniRule"/>
</dbReference>
<dbReference type="GO" id="GO:0006402">
    <property type="term" value="P:mRNA catabolic process"/>
    <property type="evidence" value="ECO:0007669"/>
    <property type="project" value="UniProtKB-UniRule"/>
</dbReference>
<dbReference type="GO" id="GO:0006401">
    <property type="term" value="P:RNA catabolic process"/>
    <property type="evidence" value="ECO:0000318"/>
    <property type="project" value="GO_Central"/>
</dbReference>
<dbReference type="GO" id="GO:0006396">
    <property type="term" value="P:RNA processing"/>
    <property type="evidence" value="ECO:0007669"/>
    <property type="project" value="InterPro"/>
</dbReference>
<dbReference type="CDD" id="cd02393">
    <property type="entry name" value="KH-I_PNPase"/>
    <property type="match status" value="1"/>
</dbReference>
<dbReference type="CDD" id="cd11363">
    <property type="entry name" value="RNase_PH_PNPase_1"/>
    <property type="match status" value="1"/>
</dbReference>
<dbReference type="CDD" id="cd11364">
    <property type="entry name" value="RNase_PH_PNPase_2"/>
    <property type="match status" value="1"/>
</dbReference>
<dbReference type="CDD" id="cd04472">
    <property type="entry name" value="S1_PNPase"/>
    <property type="match status" value="1"/>
</dbReference>
<dbReference type="FunFam" id="3.30.1370.10:FF:000001">
    <property type="entry name" value="Polyribonucleotide nucleotidyltransferase"/>
    <property type="match status" value="1"/>
</dbReference>
<dbReference type="FunFam" id="3.30.230.70:FF:000001">
    <property type="entry name" value="Polyribonucleotide nucleotidyltransferase"/>
    <property type="match status" value="1"/>
</dbReference>
<dbReference type="FunFam" id="3.30.230.70:FF:000002">
    <property type="entry name" value="Polyribonucleotide nucleotidyltransferase"/>
    <property type="match status" value="1"/>
</dbReference>
<dbReference type="FunFam" id="2.40.50.140:FF:000189">
    <property type="entry name" value="Polyribonucleotide nucleotidyltransferase, putative"/>
    <property type="match status" value="1"/>
</dbReference>
<dbReference type="Gene3D" id="3.30.230.70">
    <property type="entry name" value="GHMP Kinase, N-terminal domain"/>
    <property type="match status" value="2"/>
</dbReference>
<dbReference type="Gene3D" id="3.30.1370.10">
    <property type="entry name" value="K Homology domain, type 1"/>
    <property type="match status" value="1"/>
</dbReference>
<dbReference type="Gene3D" id="2.40.50.140">
    <property type="entry name" value="Nucleic acid-binding proteins"/>
    <property type="match status" value="1"/>
</dbReference>
<dbReference type="HAMAP" id="MF_01595">
    <property type="entry name" value="PNPase"/>
    <property type="match status" value="1"/>
</dbReference>
<dbReference type="InterPro" id="IPR001247">
    <property type="entry name" value="ExoRNase_PH_dom1"/>
</dbReference>
<dbReference type="InterPro" id="IPR015847">
    <property type="entry name" value="ExoRNase_PH_dom2"/>
</dbReference>
<dbReference type="InterPro" id="IPR036345">
    <property type="entry name" value="ExoRNase_PH_dom2_sf"/>
</dbReference>
<dbReference type="InterPro" id="IPR004087">
    <property type="entry name" value="KH_dom"/>
</dbReference>
<dbReference type="InterPro" id="IPR004088">
    <property type="entry name" value="KH_dom_type_1"/>
</dbReference>
<dbReference type="InterPro" id="IPR036612">
    <property type="entry name" value="KH_dom_type_1_sf"/>
</dbReference>
<dbReference type="InterPro" id="IPR012340">
    <property type="entry name" value="NA-bd_OB-fold"/>
</dbReference>
<dbReference type="InterPro" id="IPR012162">
    <property type="entry name" value="PNPase"/>
</dbReference>
<dbReference type="InterPro" id="IPR027408">
    <property type="entry name" value="PNPase/RNase_PH_dom_sf"/>
</dbReference>
<dbReference type="InterPro" id="IPR015848">
    <property type="entry name" value="PNPase_PH_RNA-bd_bac/org-type"/>
</dbReference>
<dbReference type="InterPro" id="IPR036456">
    <property type="entry name" value="PNPase_PH_RNA-bd_sf"/>
</dbReference>
<dbReference type="InterPro" id="IPR020568">
    <property type="entry name" value="Ribosomal_Su5_D2-typ_SF"/>
</dbReference>
<dbReference type="InterPro" id="IPR003029">
    <property type="entry name" value="S1_domain"/>
</dbReference>
<dbReference type="NCBIfam" id="TIGR03591">
    <property type="entry name" value="polynuc_phos"/>
    <property type="match status" value="1"/>
</dbReference>
<dbReference type="NCBIfam" id="NF008805">
    <property type="entry name" value="PRK11824.1"/>
    <property type="match status" value="1"/>
</dbReference>
<dbReference type="PANTHER" id="PTHR11252">
    <property type="entry name" value="POLYRIBONUCLEOTIDE NUCLEOTIDYLTRANSFERASE"/>
    <property type="match status" value="1"/>
</dbReference>
<dbReference type="PANTHER" id="PTHR11252:SF0">
    <property type="entry name" value="POLYRIBONUCLEOTIDE NUCLEOTIDYLTRANSFERASE 1, MITOCHONDRIAL"/>
    <property type="match status" value="1"/>
</dbReference>
<dbReference type="Pfam" id="PF00013">
    <property type="entry name" value="KH_1"/>
    <property type="match status" value="1"/>
</dbReference>
<dbReference type="Pfam" id="PF03726">
    <property type="entry name" value="PNPase"/>
    <property type="match status" value="1"/>
</dbReference>
<dbReference type="Pfam" id="PF01138">
    <property type="entry name" value="RNase_PH"/>
    <property type="match status" value="2"/>
</dbReference>
<dbReference type="Pfam" id="PF03725">
    <property type="entry name" value="RNase_PH_C"/>
    <property type="match status" value="1"/>
</dbReference>
<dbReference type="Pfam" id="PF00575">
    <property type="entry name" value="S1"/>
    <property type="match status" value="1"/>
</dbReference>
<dbReference type="PIRSF" id="PIRSF005499">
    <property type="entry name" value="PNPase"/>
    <property type="match status" value="1"/>
</dbReference>
<dbReference type="SMART" id="SM00322">
    <property type="entry name" value="KH"/>
    <property type="match status" value="1"/>
</dbReference>
<dbReference type="SMART" id="SM00316">
    <property type="entry name" value="S1"/>
    <property type="match status" value="1"/>
</dbReference>
<dbReference type="SUPFAM" id="SSF54791">
    <property type="entry name" value="Eukaryotic type KH-domain (KH-domain type I)"/>
    <property type="match status" value="1"/>
</dbReference>
<dbReference type="SUPFAM" id="SSF50249">
    <property type="entry name" value="Nucleic acid-binding proteins"/>
    <property type="match status" value="1"/>
</dbReference>
<dbReference type="SUPFAM" id="SSF46915">
    <property type="entry name" value="Polynucleotide phosphorylase/guanosine pentaphosphate synthase (PNPase/GPSI), domain 3"/>
    <property type="match status" value="1"/>
</dbReference>
<dbReference type="SUPFAM" id="SSF55666">
    <property type="entry name" value="Ribonuclease PH domain 2-like"/>
    <property type="match status" value="2"/>
</dbReference>
<dbReference type="SUPFAM" id="SSF54211">
    <property type="entry name" value="Ribosomal protein S5 domain 2-like"/>
    <property type="match status" value="2"/>
</dbReference>
<dbReference type="PROSITE" id="PS50084">
    <property type="entry name" value="KH_TYPE_1"/>
    <property type="match status" value="1"/>
</dbReference>
<dbReference type="PROSITE" id="PS50126">
    <property type="entry name" value="S1"/>
    <property type="match status" value="1"/>
</dbReference>
<sequence length="753" mass="81118">MSVQKVRVERKIGDSVLSFETGHIAKQAAGSVLVQYGETVVLVAAASGTPRPGIDFFPLMCDYRERLAAAGKFPGGFLKREGRPSTKEILSSRLMDRPIRPLWPAGYKDEVQVQACVIASDLQNDGDVLAMIGGATALHISPLPFKGPLGSVRVGKVDGKLVAFPTADQLEQSELDMIVSGSRDMVAMIEGFANEMPEDEMMEAIGFAHDAIREVIDLQEEFYKKVNPEKTPYQSPEDDGLLQRLTDAYYSDFKTAQQTSGKQARAEAVRAVRDRAMADVIPDPNAADAVCVNRFKSVWHDLEEKVVRDLILAGTRPDGRDHNSLRAIHCETDLLPRVHGSALFQRGETQALITIALGTSRDEQRVDGLQDEYSKKFMLDYNFPSYSVGECRPIRGPGRREIGHGCLAERSVAPVLPSADDFPYTIRVISDITESNGSSSMASVCGATLGLMASGVPISNPVAGISVGLVQDGPDNWCLITDILGTEDHFGDMDFKIAGTQNGITGIQLDLKVTGVTNDIIRATLKQSREARIEILKKMLTTIPRPRREISPTAPRLLRTKISPDKIGALIGPGGKNIRGIQETTGAVIEVDDEGTVLVASSNKESAQEAMRQVEACTATVQIGKIYDGTVSSIKEFGAFVEILPGRDGLVHISEMSGGYISSLDQVIAVGDAMKVLVIDVDEHDRVKLSRRKALEELGEEDPLAVEGEGGGDSEGGGDGEDRPRRRRGGSGGGGGGGRGRGPRRSGGGRDRD</sequence>
<gene>
    <name evidence="1" type="primary">pnp</name>
    <name type="ordered locus">RB5804</name>
</gene>
<name>PNP_RHOBA</name>
<proteinExistence type="inferred from homology"/>
<evidence type="ECO:0000255" key="1">
    <source>
        <dbReference type="HAMAP-Rule" id="MF_01595"/>
    </source>
</evidence>
<evidence type="ECO:0000256" key="2">
    <source>
        <dbReference type="SAM" id="MobiDB-lite"/>
    </source>
</evidence>
<evidence type="ECO:0000305" key="3"/>
<keyword id="KW-0963">Cytoplasm</keyword>
<keyword id="KW-0460">Magnesium</keyword>
<keyword id="KW-0479">Metal-binding</keyword>
<keyword id="KW-0548">Nucleotidyltransferase</keyword>
<keyword id="KW-1185">Reference proteome</keyword>
<keyword id="KW-0694">RNA-binding</keyword>
<keyword id="KW-0808">Transferase</keyword>
<feature type="chain" id="PRO_0000329808" description="Polyribonucleotide nucleotidyltransferase">
    <location>
        <begin position="1"/>
        <end position="753"/>
    </location>
</feature>
<feature type="domain" description="KH" evidence="1">
    <location>
        <begin position="555"/>
        <end position="614"/>
    </location>
</feature>
<feature type="domain" description="S1 motif" evidence="1">
    <location>
        <begin position="624"/>
        <end position="692"/>
    </location>
</feature>
<feature type="region of interest" description="Disordered" evidence="2">
    <location>
        <begin position="698"/>
        <end position="753"/>
    </location>
</feature>
<feature type="compositionally biased region" description="Acidic residues" evidence="2">
    <location>
        <begin position="698"/>
        <end position="719"/>
    </location>
</feature>
<feature type="compositionally biased region" description="Gly residues" evidence="2">
    <location>
        <begin position="730"/>
        <end position="740"/>
    </location>
</feature>
<feature type="binding site" evidence="1">
    <location>
        <position position="488"/>
    </location>
    <ligand>
        <name>Mg(2+)</name>
        <dbReference type="ChEBI" id="CHEBI:18420"/>
    </ligand>
</feature>
<feature type="binding site" evidence="1">
    <location>
        <position position="494"/>
    </location>
    <ligand>
        <name>Mg(2+)</name>
        <dbReference type="ChEBI" id="CHEBI:18420"/>
    </ligand>
</feature>
<comment type="function">
    <text evidence="1">Involved in mRNA degradation. Catalyzes the phosphorolysis of single-stranded polyribonucleotides processively in the 3'- to 5'-direction.</text>
</comment>
<comment type="catalytic activity">
    <reaction evidence="1">
        <text>RNA(n+1) + phosphate = RNA(n) + a ribonucleoside 5'-diphosphate</text>
        <dbReference type="Rhea" id="RHEA:22096"/>
        <dbReference type="Rhea" id="RHEA-COMP:14527"/>
        <dbReference type="Rhea" id="RHEA-COMP:17342"/>
        <dbReference type="ChEBI" id="CHEBI:43474"/>
        <dbReference type="ChEBI" id="CHEBI:57930"/>
        <dbReference type="ChEBI" id="CHEBI:140395"/>
        <dbReference type="EC" id="2.7.7.8"/>
    </reaction>
</comment>
<comment type="cofactor">
    <cofactor evidence="1">
        <name>Mg(2+)</name>
        <dbReference type="ChEBI" id="CHEBI:18420"/>
    </cofactor>
</comment>
<comment type="subcellular location">
    <subcellularLocation>
        <location evidence="1">Cytoplasm</location>
    </subcellularLocation>
</comment>
<comment type="similarity">
    <text evidence="1">Belongs to the polyribonucleotide nucleotidyltransferase family.</text>
</comment>
<comment type="sequence caution" evidence="3">
    <conflict type="erroneous initiation">
        <sequence resource="EMBL-CDS" id="CAD74445"/>
    </conflict>
</comment>
<protein>
    <recommendedName>
        <fullName evidence="1">Polyribonucleotide nucleotidyltransferase</fullName>
        <ecNumber evidence="1">2.7.7.8</ecNumber>
    </recommendedName>
    <alternativeName>
        <fullName evidence="1">Polynucleotide phosphorylase</fullName>
        <shortName evidence="1">PNPase</shortName>
    </alternativeName>
</protein>
<organism>
    <name type="scientific">Rhodopirellula baltica (strain DSM 10527 / NCIMB 13988 / SH1)</name>
    <dbReference type="NCBI Taxonomy" id="243090"/>
    <lineage>
        <taxon>Bacteria</taxon>
        <taxon>Pseudomonadati</taxon>
        <taxon>Planctomycetota</taxon>
        <taxon>Planctomycetia</taxon>
        <taxon>Pirellulales</taxon>
        <taxon>Pirellulaceae</taxon>
        <taxon>Rhodopirellula</taxon>
    </lineage>
</organism>
<accession>Q7UR95</accession>